<organism>
    <name type="scientific">Streptococcus pyogenes serotype M6 (strain ATCC BAA-946 / MGAS10394)</name>
    <dbReference type="NCBI Taxonomy" id="286636"/>
    <lineage>
        <taxon>Bacteria</taxon>
        <taxon>Bacillati</taxon>
        <taxon>Bacillota</taxon>
        <taxon>Bacilli</taxon>
        <taxon>Lactobacillales</taxon>
        <taxon>Streptococcaceae</taxon>
        <taxon>Streptococcus</taxon>
    </lineage>
</organism>
<evidence type="ECO:0000255" key="1">
    <source>
        <dbReference type="HAMAP-Rule" id="MF_00361"/>
    </source>
</evidence>
<evidence type="ECO:0000305" key="2"/>
<name>NADK_STRP6</name>
<feature type="chain" id="PRO_0000120674" description="NAD kinase">
    <location>
        <begin position="1"/>
        <end position="278"/>
    </location>
</feature>
<feature type="active site" description="Proton acceptor" evidence="1">
    <location>
        <position position="56"/>
    </location>
</feature>
<feature type="binding site" evidence="1">
    <location>
        <begin position="56"/>
        <end position="57"/>
    </location>
    <ligand>
        <name>NAD(+)</name>
        <dbReference type="ChEBI" id="CHEBI:57540"/>
    </ligand>
</feature>
<feature type="binding site" evidence="1">
    <location>
        <begin position="132"/>
        <end position="133"/>
    </location>
    <ligand>
        <name>NAD(+)</name>
        <dbReference type="ChEBI" id="CHEBI:57540"/>
    </ligand>
</feature>
<feature type="binding site" evidence="1">
    <location>
        <position position="158"/>
    </location>
    <ligand>
        <name>NAD(+)</name>
        <dbReference type="ChEBI" id="CHEBI:57540"/>
    </ligand>
</feature>
<feature type="binding site" evidence="1">
    <location>
        <position position="160"/>
    </location>
    <ligand>
        <name>NAD(+)</name>
        <dbReference type="ChEBI" id="CHEBI:57540"/>
    </ligand>
</feature>
<feature type="binding site" evidence="1">
    <location>
        <begin position="171"/>
        <end position="176"/>
    </location>
    <ligand>
        <name>NAD(+)</name>
        <dbReference type="ChEBI" id="CHEBI:57540"/>
    </ligand>
</feature>
<gene>
    <name evidence="1" type="primary">nadK</name>
    <name type="ordered locus">M6_Spy0846</name>
</gene>
<protein>
    <recommendedName>
        <fullName evidence="1">NAD kinase</fullName>
        <ecNumber evidence="1">2.7.1.23</ecNumber>
    </recommendedName>
    <alternativeName>
        <fullName evidence="1">ATP-dependent NAD kinase</fullName>
    </alternativeName>
</protein>
<dbReference type="EC" id="2.7.1.23" evidence="1"/>
<dbReference type="EMBL" id="CP000003">
    <property type="protein sequence ID" value="AAT86981.1"/>
    <property type="status" value="ALT_INIT"/>
    <property type="molecule type" value="Genomic_DNA"/>
</dbReference>
<dbReference type="RefSeq" id="WP_002993124.1">
    <property type="nucleotide sequence ID" value="NC_006086.1"/>
</dbReference>
<dbReference type="SMR" id="Q5XC82"/>
<dbReference type="KEGG" id="spa:M6_Spy0846"/>
<dbReference type="HOGENOM" id="CLU_008831_0_3_9"/>
<dbReference type="Proteomes" id="UP000001167">
    <property type="component" value="Chromosome"/>
</dbReference>
<dbReference type="GO" id="GO:0005737">
    <property type="term" value="C:cytoplasm"/>
    <property type="evidence" value="ECO:0007669"/>
    <property type="project" value="UniProtKB-SubCell"/>
</dbReference>
<dbReference type="GO" id="GO:0005524">
    <property type="term" value="F:ATP binding"/>
    <property type="evidence" value="ECO:0007669"/>
    <property type="project" value="UniProtKB-KW"/>
</dbReference>
<dbReference type="GO" id="GO:0046872">
    <property type="term" value="F:metal ion binding"/>
    <property type="evidence" value="ECO:0007669"/>
    <property type="project" value="UniProtKB-UniRule"/>
</dbReference>
<dbReference type="GO" id="GO:0051287">
    <property type="term" value="F:NAD binding"/>
    <property type="evidence" value="ECO:0007669"/>
    <property type="project" value="UniProtKB-ARBA"/>
</dbReference>
<dbReference type="GO" id="GO:0003951">
    <property type="term" value="F:NAD+ kinase activity"/>
    <property type="evidence" value="ECO:0007669"/>
    <property type="project" value="UniProtKB-UniRule"/>
</dbReference>
<dbReference type="GO" id="GO:0019674">
    <property type="term" value="P:NAD metabolic process"/>
    <property type="evidence" value="ECO:0007669"/>
    <property type="project" value="InterPro"/>
</dbReference>
<dbReference type="GO" id="GO:0006741">
    <property type="term" value="P:NADP biosynthetic process"/>
    <property type="evidence" value="ECO:0007669"/>
    <property type="project" value="UniProtKB-UniRule"/>
</dbReference>
<dbReference type="Gene3D" id="3.40.50.10330">
    <property type="entry name" value="Probable inorganic polyphosphate/atp-NAD kinase, domain 1"/>
    <property type="match status" value="1"/>
</dbReference>
<dbReference type="Gene3D" id="2.60.200.30">
    <property type="entry name" value="Probable inorganic polyphosphate/atp-NAD kinase, domain 2"/>
    <property type="match status" value="1"/>
</dbReference>
<dbReference type="HAMAP" id="MF_00361">
    <property type="entry name" value="NAD_kinase"/>
    <property type="match status" value="1"/>
</dbReference>
<dbReference type="InterPro" id="IPR017438">
    <property type="entry name" value="ATP-NAD_kinase_N"/>
</dbReference>
<dbReference type="InterPro" id="IPR017437">
    <property type="entry name" value="ATP-NAD_kinase_PpnK-typ_C"/>
</dbReference>
<dbReference type="InterPro" id="IPR016064">
    <property type="entry name" value="NAD/diacylglycerol_kinase_sf"/>
</dbReference>
<dbReference type="InterPro" id="IPR002504">
    <property type="entry name" value="NADK"/>
</dbReference>
<dbReference type="NCBIfam" id="NF003424">
    <property type="entry name" value="PRK04885.1"/>
    <property type="match status" value="1"/>
</dbReference>
<dbReference type="PANTHER" id="PTHR20275">
    <property type="entry name" value="NAD KINASE"/>
    <property type="match status" value="1"/>
</dbReference>
<dbReference type="PANTHER" id="PTHR20275:SF0">
    <property type="entry name" value="NAD KINASE"/>
    <property type="match status" value="1"/>
</dbReference>
<dbReference type="Pfam" id="PF01513">
    <property type="entry name" value="NAD_kinase"/>
    <property type="match status" value="1"/>
</dbReference>
<dbReference type="Pfam" id="PF20143">
    <property type="entry name" value="NAD_kinase_C"/>
    <property type="match status" value="1"/>
</dbReference>
<dbReference type="SUPFAM" id="SSF111331">
    <property type="entry name" value="NAD kinase/diacylglycerol kinase-like"/>
    <property type="match status" value="1"/>
</dbReference>
<reference key="1">
    <citation type="journal article" date="2004" name="J. Infect. Dis.">
        <title>Progress toward characterization of the group A Streptococcus metagenome: complete genome sequence of a macrolide-resistant serotype M6 strain.</title>
        <authorList>
            <person name="Banks D.J."/>
            <person name="Porcella S.F."/>
            <person name="Barbian K.D."/>
            <person name="Beres S.B."/>
            <person name="Philips L.E."/>
            <person name="Voyich J.M."/>
            <person name="DeLeo F.R."/>
            <person name="Martin J.M."/>
            <person name="Somerville G.A."/>
            <person name="Musser J.M."/>
        </authorList>
    </citation>
    <scope>NUCLEOTIDE SEQUENCE [LARGE SCALE GENOMIC DNA]</scope>
    <source>
        <strain>ATCC BAA-946 / MGAS10394</strain>
    </source>
</reference>
<keyword id="KW-0067">ATP-binding</keyword>
<keyword id="KW-0963">Cytoplasm</keyword>
<keyword id="KW-0418">Kinase</keyword>
<keyword id="KW-0520">NAD</keyword>
<keyword id="KW-0521">NADP</keyword>
<keyword id="KW-0547">Nucleotide-binding</keyword>
<keyword id="KW-0808">Transferase</keyword>
<proteinExistence type="inferred from homology"/>
<accession>Q5XC82</accession>
<sequence>MTQMNYTGKVKRVAIIANGKYQSKRVASKLFSVFKDDPDFYLSKKNPDIVISIGGDGMLLSAFHMYEKELDKVRFVGIHTGHLGFYTDYRDFEVDKLIDNLRKDKGEQISYPILKVAITLDDGRVVKARALNEATVKRIEKTMVADVIINHVKFESFRGDGISVSTPTGSTAYNKSLGGAVLHPTIEALQLTEISSLNNRVFRTLGSSIIIPKKDKIELVPKRLGIYTISIDNKTYQLKNVTKVEYFIDDEKIHFVSSPSHTSFWERVKDAFIGEIDS</sequence>
<comment type="function">
    <text evidence="1">Involved in the regulation of the intracellular balance of NAD and NADP, and is a key enzyme in the biosynthesis of NADP. Catalyzes specifically the phosphorylation on 2'-hydroxyl of the adenosine moiety of NAD to yield NADP.</text>
</comment>
<comment type="catalytic activity">
    <reaction evidence="1">
        <text>NAD(+) + ATP = ADP + NADP(+) + H(+)</text>
        <dbReference type="Rhea" id="RHEA:18629"/>
        <dbReference type="ChEBI" id="CHEBI:15378"/>
        <dbReference type="ChEBI" id="CHEBI:30616"/>
        <dbReference type="ChEBI" id="CHEBI:57540"/>
        <dbReference type="ChEBI" id="CHEBI:58349"/>
        <dbReference type="ChEBI" id="CHEBI:456216"/>
        <dbReference type="EC" id="2.7.1.23"/>
    </reaction>
</comment>
<comment type="cofactor">
    <cofactor evidence="1">
        <name>a divalent metal cation</name>
        <dbReference type="ChEBI" id="CHEBI:60240"/>
    </cofactor>
</comment>
<comment type="subcellular location">
    <subcellularLocation>
        <location evidence="1">Cytoplasm</location>
    </subcellularLocation>
</comment>
<comment type="similarity">
    <text evidence="1">Belongs to the NAD kinase family.</text>
</comment>
<comment type="sequence caution" evidence="2">
    <conflict type="erroneous initiation">
        <sequence resource="EMBL-CDS" id="AAT86981"/>
    </conflict>
    <text>Extended N-terminus.</text>
</comment>